<feature type="initiator methionine" description="Removed" evidence="1">
    <location>
        <position position="1"/>
    </location>
</feature>
<feature type="chain" id="PRO_0000103025" description="SsrA-binding protein">
    <location>
        <begin position="2"/>
        <end position="160"/>
    </location>
</feature>
<proteinExistence type="inferred from homology"/>
<comment type="function">
    <text evidence="2">Required for rescue of stalled ribosomes mediated by trans-translation. Binds to transfer-messenger RNA (tmRNA), required for stable association of tmRNA with ribosomes. tmRNA and SmpB together mimic tRNA shape, replacing the anticodon stem-loop with SmpB. tmRNA is encoded by the ssrA gene; the 2 termini fold to resemble tRNA(Ala) and it encodes a 'tag peptide', a short internal open reading frame. During trans-translation Ala-aminoacylated tmRNA acts like a tRNA, entering the A-site of stalled ribosomes, displacing the stalled mRNA. The ribosome then switches to translate the ORF on the tmRNA; the nascent peptide is terminated with the 'tag peptide' encoded by the tmRNA and targeted for degradation. The ribosome is freed to recommence translation, which seems to be the essential function of trans-translation.</text>
</comment>
<comment type="subcellular location">
    <subcellularLocation>
        <location evidence="2">Cytoplasm</location>
    </subcellularLocation>
    <text evidence="2">The tmRNA-SmpB complex associates with stalled 70S ribosomes.</text>
</comment>
<comment type="similarity">
    <text evidence="2">Belongs to the SmpB family.</text>
</comment>
<evidence type="ECO:0000250" key="1"/>
<evidence type="ECO:0000255" key="2">
    <source>
        <dbReference type="HAMAP-Rule" id="MF_00023"/>
    </source>
</evidence>
<name>SSRP_SHIFL</name>
<protein>
    <recommendedName>
        <fullName evidence="2">SsrA-binding protein</fullName>
    </recommendedName>
    <alternativeName>
        <fullName evidence="2">Small protein B</fullName>
    </alternativeName>
</protein>
<accession>P0A835</accession>
<accession>P32052</accession>
<accession>P77011</accession>
<dbReference type="EMBL" id="AE005674">
    <property type="protein sequence ID" value="AAN44174.1"/>
    <property type="molecule type" value="Genomic_DNA"/>
</dbReference>
<dbReference type="EMBL" id="AE014073">
    <property type="protein sequence ID" value="AAP17999.1"/>
    <property type="molecule type" value="Genomic_DNA"/>
</dbReference>
<dbReference type="RefSeq" id="NP_708467.1">
    <property type="nucleotide sequence ID" value="NC_004337.2"/>
</dbReference>
<dbReference type="RefSeq" id="WP_000162574.1">
    <property type="nucleotide sequence ID" value="NZ_WPGW01000074.1"/>
</dbReference>
<dbReference type="SMR" id="P0A835"/>
<dbReference type="STRING" id="198214.SF2679"/>
<dbReference type="PaxDb" id="198214-SF2679"/>
<dbReference type="GeneID" id="1027251"/>
<dbReference type="GeneID" id="93774470"/>
<dbReference type="KEGG" id="sfl:SF2679"/>
<dbReference type="KEGG" id="sfx:S2857"/>
<dbReference type="PATRIC" id="fig|198214.7.peg.3189"/>
<dbReference type="HOGENOM" id="CLU_108953_3_0_6"/>
<dbReference type="Proteomes" id="UP000001006">
    <property type="component" value="Chromosome"/>
</dbReference>
<dbReference type="Proteomes" id="UP000002673">
    <property type="component" value="Chromosome"/>
</dbReference>
<dbReference type="GO" id="GO:0005829">
    <property type="term" value="C:cytosol"/>
    <property type="evidence" value="ECO:0007669"/>
    <property type="project" value="TreeGrafter"/>
</dbReference>
<dbReference type="GO" id="GO:0003723">
    <property type="term" value="F:RNA binding"/>
    <property type="evidence" value="ECO:0007669"/>
    <property type="project" value="UniProtKB-UniRule"/>
</dbReference>
<dbReference type="GO" id="GO:0070929">
    <property type="term" value="P:trans-translation"/>
    <property type="evidence" value="ECO:0007669"/>
    <property type="project" value="UniProtKB-UniRule"/>
</dbReference>
<dbReference type="CDD" id="cd09294">
    <property type="entry name" value="SmpB"/>
    <property type="match status" value="1"/>
</dbReference>
<dbReference type="FunFam" id="2.40.280.10:FF:000001">
    <property type="entry name" value="SsrA-binding protein"/>
    <property type="match status" value="1"/>
</dbReference>
<dbReference type="Gene3D" id="2.40.280.10">
    <property type="match status" value="1"/>
</dbReference>
<dbReference type="HAMAP" id="MF_00023">
    <property type="entry name" value="SmpB"/>
    <property type="match status" value="1"/>
</dbReference>
<dbReference type="InterPro" id="IPR023620">
    <property type="entry name" value="SmpB"/>
</dbReference>
<dbReference type="InterPro" id="IPR000037">
    <property type="entry name" value="SsrA-bd_prot"/>
</dbReference>
<dbReference type="InterPro" id="IPR020081">
    <property type="entry name" value="SsrA-bd_prot_CS"/>
</dbReference>
<dbReference type="NCBIfam" id="NF003843">
    <property type="entry name" value="PRK05422.1"/>
    <property type="match status" value="1"/>
</dbReference>
<dbReference type="NCBIfam" id="TIGR00086">
    <property type="entry name" value="smpB"/>
    <property type="match status" value="1"/>
</dbReference>
<dbReference type="PANTHER" id="PTHR30308:SF2">
    <property type="entry name" value="SSRA-BINDING PROTEIN"/>
    <property type="match status" value="1"/>
</dbReference>
<dbReference type="PANTHER" id="PTHR30308">
    <property type="entry name" value="TMRNA-BINDING COMPONENT OF TRANS-TRANSLATION TAGGING COMPLEX"/>
    <property type="match status" value="1"/>
</dbReference>
<dbReference type="Pfam" id="PF01668">
    <property type="entry name" value="SmpB"/>
    <property type="match status" value="1"/>
</dbReference>
<dbReference type="SUPFAM" id="SSF74982">
    <property type="entry name" value="Small protein B (SmpB)"/>
    <property type="match status" value="1"/>
</dbReference>
<dbReference type="PROSITE" id="PS01317">
    <property type="entry name" value="SSRP"/>
    <property type="match status" value="1"/>
</dbReference>
<reference key="1">
    <citation type="journal article" date="2002" name="Nucleic Acids Res.">
        <title>Genome sequence of Shigella flexneri 2a: insights into pathogenicity through comparison with genomes of Escherichia coli K12 and O157.</title>
        <authorList>
            <person name="Jin Q."/>
            <person name="Yuan Z."/>
            <person name="Xu J."/>
            <person name="Wang Y."/>
            <person name="Shen Y."/>
            <person name="Lu W."/>
            <person name="Wang J."/>
            <person name="Liu H."/>
            <person name="Yang J."/>
            <person name="Yang F."/>
            <person name="Zhang X."/>
            <person name="Zhang J."/>
            <person name="Yang G."/>
            <person name="Wu H."/>
            <person name="Qu D."/>
            <person name="Dong J."/>
            <person name="Sun L."/>
            <person name="Xue Y."/>
            <person name="Zhao A."/>
            <person name="Gao Y."/>
            <person name="Zhu J."/>
            <person name="Kan B."/>
            <person name="Ding K."/>
            <person name="Chen S."/>
            <person name="Cheng H."/>
            <person name="Yao Z."/>
            <person name="He B."/>
            <person name="Chen R."/>
            <person name="Ma D."/>
            <person name="Qiang B."/>
            <person name="Wen Y."/>
            <person name="Hou Y."/>
            <person name="Yu J."/>
        </authorList>
    </citation>
    <scope>NUCLEOTIDE SEQUENCE [LARGE SCALE GENOMIC DNA]</scope>
    <source>
        <strain>301 / Serotype 2a</strain>
    </source>
</reference>
<reference key="2">
    <citation type="journal article" date="2003" name="Infect. Immun.">
        <title>Complete genome sequence and comparative genomics of Shigella flexneri serotype 2a strain 2457T.</title>
        <authorList>
            <person name="Wei J."/>
            <person name="Goldberg M.B."/>
            <person name="Burland V."/>
            <person name="Venkatesan M.M."/>
            <person name="Deng W."/>
            <person name="Fournier G."/>
            <person name="Mayhew G.F."/>
            <person name="Plunkett G. III"/>
            <person name="Rose D.J."/>
            <person name="Darling A."/>
            <person name="Mau B."/>
            <person name="Perna N.T."/>
            <person name="Payne S.M."/>
            <person name="Runyen-Janecky L.J."/>
            <person name="Zhou S."/>
            <person name="Schwartz D.C."/>
            <person name="Blattner F.R."/>
        </authorList>
    </citation>
    <scope>NUCLEOTIDE SEQUENCE [LARGE SCALE GENOMIC DNA]</scope>
    <source>
        <strain>ATCC 700930 / 2457T / Serotype 2a</strain>
    </source>
</reference>
<organism>
    <name type="scientific">Shigella flexneri</name>
    <dbReference type="NCBI Taxonomy" id="623"/>
    <lineage>
        <taxon>Bacteria</taxon>
        <taxon>Pseudomonadati</taxon>
        <taxon>Pseudomonadota</taxon>
        <taxon>Gammaproteobacteria</taxon>
        <taxon>Enterobacterales</taxon>
        <taxon>Enterobacteriaceae</taxon>
        <taxon>Shigella</taxon>
    </lineage>
</organism>
<keyword id="KW-0963">Cytoplasm</keyword>
<keyword id="KW-1185">Reference proteome</keyword>
<keyword id="KW-0694">RNA-binding</keyword>
<gene>
    <name evidence="2" type="primary">smpB</name>
    <name type="synonym">smqB</name>
    <name type="ordered locus">SF2679</name>
    <name type="ordered locus">S2857</name>
</gene>
<sequence>MTKKKAHKPGSATIALNKRARHEYFIEEEFEAGLALQGWEVKSLRAGKANISDSYVLLRDGEAFLFGANITPMAVASTHVVCDPTRTRKLLLNQRELDSLYGRVNREGYTVVALSLYWKNAWCKVKIGVAKGKKQHDKRSDIKEREWQVDKARIMKNAHR</sequence>